<evidence type="ECO:0000305" key="1"/>
<feature type="chain" id="PRO_0000153789" description="Large ribosomal subunit protein eL31">
    <location>
        <begin position="1"/>
        <end position="104"/>
    </location>
</feature>
<protein>
    <recommendedName>
        <fullName evidence="1">Large ribosomal subunit protein eL31</fullName>
    </recommendedName>
    <alternativeName>
        <fullName>50S ribosomal protein L31e</fullName>
    </alternativeName>
</protein>
<proteinExistence type="inferred from homology"/>
<gene>
    <name type="primary">rpl31e</name>
    <name type="ordered locus">APE_1087.1</name>
</gene>
<accession>Q9YD25</accession>
<dbReference type="EMBL" id="BA000002">
    <property type="protein sequence ID" value="BAA80072.2"/>
    <property type="molecule type" value="Genomic_DNA"/>
</dbReference>
<dbReference type="PIR" id="H72708">
    <property type="entry name" value="H72708"/>
</dbReference>
<dbReference type="RefSeq" id="WP_010866164.1">
    <property type="nucleotide sequence ID" value="NC_000854.2"/>
</dbReference>
<dbReference type="SMR" id="Q9YD25"/>
<dbReference type="STRING" id="272557.APE_1087.1"/>
<dbReference type="EnsemblBacteria" id="BAA80072">
    <property type="protein sequence ID" value="BAA80072"/>
    <property type="gene ID" value="APE_1087.1"/>
</dbReference>
<dbReference type="GeneID" id="1445782"/>
<dbReference type="KEGG" id="ape:APE_1087.1"/>
<dbReference type="eggNOG" id="arCOG04473">
    <property type="taxonomic scope" value="Archaea"/>
</dbReference>
<dbReference type="Proteomes" id="UP000002518">
    <property type="component" value="Chromosome"/>
</dbReference>
<dbReference type="GO" id="GO:0022625">
    <property type="term" value="C:cytosolic large ribosomal subunit"/>
    <property type="evidence" value="ECO:0007669"/>
    <property type="project" value="TreeGrafter"/>
</dbReference>
<dbReference type="GO" id="GO:0003735">
    <property type="term" value="F:structural constituent of ribosome"/>
    <property type="evidence" value="ECO:0007669"/>
    <property type="project" value="InterPro"/>
</dbReference>
<dbReference type="GO" id="GO:0002181">
    <property type="term" value="P:cytoplasmic translation"/>
    <property type="evidence" value="ECO:0007669"/>
    <property type="project" value="TreeGrafter"/>
</dbReference>
<dbReference type="CDD" id="cd00463">
    <property type="entry name" value="Ribosomal_L31e"/>
    <property type="match status" value="1"/>
</dbReference>
<dbReference type="Gene3D" id="3.10.440.10">
    <property type="match status" value="1"/>
</dbReference>
<dbReference type="HAMAP" id="MF_00410">
    <property type="entry name" value="Ribosomal_eL31"/>
    <property type="match status" value="1"/>
</dbReference>
<dbReference type="InterPro" id="IPR000054">
    <property type="entry name" value="Ribosomal_eL31"/>
</dbReference>
<dbReference type="InterPro" id="IPR020052">
    <property type="entry name" value="Ribosomal_eL31_CS"/>
</dbReference>
<dbReference type="InterPro" id="IPR023621">
    <property type="entry name" value="Ribosomal_eL31_dom_sf"/>
</dbReference>
<dbReference type="NCBIfam" id="NF002258">
    <property type="entry name" value="PRK01192.1-1"/>
    <property type="match status" value="1"/>
</dbReference>
<dbReference type="PANTHER" id="PTHR10956">
    <property type="entry name" value="60S RIBOSOMAL PROTEIN L31"/>
    <property type="match status" value="1"/>
</dbReference>
<dbReference type="PANTHER" id="PTHR10956:SF0">
    <property type="entry name" value="60S RIBOSOMAL PROTEIN L31"/>
    <property type="match status" value="1"/>
</dbReference>
<dbReference type="Pfam" id="PF01198">
    <property type="entry name" value="Ribosomal_L31e"/>
    <property type="match status" value="1"/>
</dbReference>
<dbReference type="SMART" id="SM01380">
    <property type="entry name" value="Ribosomal_L31e"/>
    <property type="match status" value="1"/>
</dbReference>
<dbReference type="SUPFAM" id="SSF54575">
    <property type="entry name" value="Ribosomal protein L31e"/>
    <property type="match status" value="1"/>
</dbReference>
<dbReference type="PROSITE" id="PS01144">
    <property type="entry name" value="RIBOSOMAL_L31E"/>
    <property type="match status" value="1"/>
</dbReference>
<comment type="similarity">
    <text evidence="1">Belongs to the eukaryotic ribosomal protein eL31 family.</text>
</comment>
<organism>
    <name type="scientific">Aeropyrum pernix (strain ATCC 700893 / DSM 11879 / JCM 9820 / NBRC 100138 / K1)</name>
    <dbReference type="NCBI Taxonomy" id="272557"/>
    <lineage>
        <taxon>Archaea</taxon>
        <taxon>Thermoproteota</taxon>
        <taxon>Thermoprotei</taxon>
        <taxon>Desulfurococcales</taxon>
        <taxon>Desulfurococcaceae</taxon>
        <taxon>Aeropyrum</taxon>
    </lineage>
</organism>
<name>RL31_AERPE</name>
<keyword id="KW-1185">Reference proteome</keyword>
<keyword id="KW-0687">Ribonucleoprotein</keyword>
<keyword id="KW-0689">Ribosomal protein</keyword>
<sequence>MPSEGTWVYVVNLRRVYWGRRTRRAIRAVRMVREFVRRHTKADEVVIDNELNNYIWSRSREKPPARVKIIVSIREEEPEEGGERIRKAVVRLAGRKLRPGRYKG</sequence>
<reference key="1">
    <citation type="journal article" date="1999" name="DNA Res.">
        <title>Complete genome sequence of an aerobic hyper-thermophilic crenarchaeon, Aeropyrum pernix K1.</title>
        <authorList>
            <person name="Kawarabayasi Y."/>
            <person name="Hino Y."/>
            <person name="Horikawa H."/>
            <person name="Yamazaki S."/>
            <person name="Haikawa Y."/>
            <person name="Jin-no K."/>
            <person name="Takahashi M."/>
            <person name="Sekine M."/>
            <person name="Baba S."/>
            <person name="Ankai A."/>
            <person name="Kosugi H."/>
            <person name="Hosoyama A."/>
            <person name="Fukui S."/>
            <person name="Nagai Y."/>
            <person name="Nishijima K."/>
            <person name="Nakazawa H."/>
            <person name="Takamiya M."/>
            <person name="Masuda S."/>
            <person name="Funahashi T."/>
            <person name="Tanaka T."/>
            <person name="Kudoh Y."/>
            <person name="Yamazaki J."/>
            <person name="Kushida N."/>
            <person name="Oguchi A."/>
            <person name="Aoki K."/>
            <person name="Kubota K."/>
            <person name="Nakamura Y."/>
            <person name="Nomura N."/>
            <person name="Sako Y."/>
            <person name="Kikuchi H."/>
        </authorList>
    </citation>
    <scope>NUCLEOTIDE SEQUENCE [LARGE SCALE GENOMIC DNA]</scope>
    <source>
        <strain>ATCC 700893 / DSM 11879 / JCM 9820 / NBRC 100138 / K1</strain>
    </source>
</reference>